<organism>
    <name type="scientific">Serratia proteamaculans (strain 568)</name>
    <dbReference type="NCBI Taxonomy" id="399741"/>
    <lineage>
        <taxon>Bacteria</taxon>
        <taxon>Pseudomonadati</taxon>
        <taxon>Pseudomonadota</taxon>
        <taxon>Gammaproteobacteria</taxon>
        <taxon>Enterobacterales</taxon>
        <taxon>Yersiniaceae</taxon>
        <taxon>Serratia</taxon>
    </lineage>
</organism>
<comment type="function">
    <text evidence="1">Specifically catalyzes the cleavage of the D-lactyl ether substituent of MurNAc 6-phosphate, producing GlcNAc 6-phosphate and D-lactate. Together with AnmK, is also required for the utilization of anhydro-N-acetylmuramic acid (anhMurNAc) either imported from the medium or derived from its own cell wall murein, and thus plays a role in cell wall recycling.</text>
</comment>
<comment type="catalytic activity">
    <reaction evidence="1">
        <text>N-acetyl-D-muramate 6-phosphate + H2O = N-acetyl-D-glucosamine 6-phosphate + (R)-lactate</text>
        <dbReference type="Rhea" id="RHEA:26410"/>
        <dbReference type="ChEBI" id="CHEBI:15377"/>
        <dbReference type="ChEBI" id="CHEBI:16004"/>
        <dbReference type="ChEBI" id="CHEBI:57513"/>
        <dbReference type="ChEBI" id="CHEBI:58722"/>
        <dbReference type="EC" id="4.2.1.126"/>
    </reaction>
</comment>
<comment type="pathway">
    <text evidence="1">Amino-sugar metabolism; 1,6-anhydro-N-acetylmuramate degradation.</text>
</comment>
<comment type="pathway">
    <text evidence="1">Amino-sugar metabolism; N-acetylmuramate degradation.</text>
</comment>
<comment type="pathway">
    <text evidence="1">Cell wall biogenesis; peptidoglycan recycling.</text>
</comment>
<comment type="subunit">
    <text evidence="1">Homodimer.</text>
</comment>
<comment type="induction">
    <text evidence="1">Induced by MurNAc 6-phosphate that releases the repressor MurR from the DNA. Repressed by MurR in the absence of MurNAc 6-phosphate.</text>
</comment>
<comment type="miscellaneous">
    <text evidence="1">A lyase-type mechanism (elimination/hydration) is suggested for the cleavage of the lactyl ether bond of MurNAc 6-phosphate, with the formation of an alpha,beta-unsaturated aldehyde intermediate with (E)-stereochemistry, followed by the syn addition of water to give product.</text>
</comment>
<comment type="similarity">
    <text evidence="1">Belongs to the GCKR-like family. MurNAc-6-P etherase subfamily.</text>
</comment>
<feature type="chain" id="PRO_1000057460" description="N-acetylmuramic acid 6-phosphate etherase">
    <location>
        <begin position="1"/>
        <end position="297"/>
    </location>
</feature>
<feature type="domain" description="SIS" evidence="1">
    <location>
        <begin position="55"/>
        <end position="218"/>
    </location>
</feature>
<feature type="active site" description="Proton donor" evidence="1">
    <location>
        <position position="83"/>
    </location>
</feature>
<feature type="active site" evidence="1">
    <location>
        <position position="114"/>
    </location>
</feature>
<keyword id="KW-0119">Carbohydrate metabolism</keyword>
<keyword id="KW-0456">Lyase</keyword>
<sequence length="297" mass="30727">MNLGALVSETRNPATMGLDEMSTLEMVSCFNQEDRKVPEAIEKVLPAIAQAVDLAAAALKAGGRLIYLGAGTSGRLGVLDASECPPTFGVPHGMVIGLIAGGPGALLKAVEGAEDDAALGEADLVALDLTATDMVVGLAASGRTPYVIGALRYARQLGCPTAAISCNPDSPIAHEVQVAISPVVGPEALTGSTRLKSGTAQKLVLNMLSTGAMVKLGKVYENLMVDVKATNVKLVDRACRIVVEATGAERSQAEAALTQTGFEVKPAILMILAGIDAQEAQQRLQQHDGYLRAALTR</sequence>
<evidence type="ECO:0000255" key="1">
    <source>
        <dbReference type="HAMAP-Rule" id="MF_00068"/>
    </source>
</evidence>
<protein>
    <recommendedName>
        <fullName evidence="1">N-acetylmuramic acid 6-phosphate etherase</fullName>
        <shortName evidence="1">MurNAc-6-P etherase</shortName>
        <ecNumber evidence="1">4.2.1.126</ecNumber>
    </recommendedName>
    <alternativeName>
        <fullName evidence="1">N-acetylmuramic acid 6-phosphate hydrolase</fullName>
    </alternativeName>
    <alternativeName>
        <fullName evidence="1">N-acetylmuramic acid 6-phosphate lyase</fullName>
    </alternativeName>
</protein>
<name>MURQ_SERP5</name>
<dbReference type="EC" id="4.2.1.126" evidence="1"/>
<dbReference type="EMBL" id="CP000826">
    <property type="protein sequence ID" value="ABV42757.1"/>
    <property type="molecule type" value="Genomic_DNA"/>
</dbReference>
<dbReference type="SMR" id="A8GI17"/>
<dbReference type="STRING" id="399741.Spro_3661"/>
<dbReference type="KEGG" id="spe:Spro_3661"/>
<dbReference type="eggNOG" id="COG2103">
    <property type="taxonomic scope" value="Bacteria"/>
</dbReference>
<dbReference type="HOGENOM" id="CLU_049049_1_1_6"/>
<dbReference type="OrthoDB" id="9813395at2"/>
<dbReference type="UniPathway" id="UPA00342"/>
<dbReference type="UniPathway" id="UPA00343"/>
<dbReference type="UniPathway" id="UPA00544"/>
<dbReference type="GO" id="GO:0097367">
    <property type="term" value="F:carbohydrate derivative binding"/>
    <property type="evidence" value="ECO:0007669"/>
    <property type="project" value="InterPro"/>
</dbReference>
<dbReference type="GO" id="GO:0016835">
    <property type="term" value="F:carbon-oxygen lyase activity"/>
    <property type="evidence" value="ECO:0007669"/>
    <property type="project" value="UniProtKB-UniRule"/>
</dbReference>
<dbReference type="GO" id="GO:0016803">
    <property type="term" value="F:ether hydrolase activity"/>
    <property type="evidence" value="ECO:0007669"/>
    <property type="project" value="TreeGrafter"/>
</dbReference>
<dbReference type="GO" id="GO:0097175">
    <property type="term" value="P:1,6-anhydro-N-acetyl-beta-muramic acid catabolic process"/>
    <property type="evidence" value="ECO:0007669"/>
    <property type="project" value="UniProtKB-UniRule"/>
</dbReference>
<dbReference type="GO" id="GO:0046348">
    <property type="term" value="P:amino sugar catabolic process"/>
    <property type="evidence" value="ECO:0007669"/>
    <property type="project" value="InterPro"/>
</dbReference>
<dbReference type="GO" id="GO:0097173">
    <property type="term" value="P:N-acetylmuramic acid catabolic process"/>
    <property type="evidence" value="ECO:0007669"/>
    <property type="project" value="UniProtKB-UniPathway"/>
</dbReference>
<dbReference type="GO" id="GO:0009254">
    <property type="term" value="P:peptidoglycan turnover"/>
    <property type="evidence" value="ECO:0007669"/>
    <property type="project" value="UniProtKB-UniRule"/>
</dbReference>
<dbReference type="CDD" id="cd05007">
    <property type="entry name" value="SIS_Etherase"/>
    <property type="match status" value="1"/>
</dbReference>
<dbReference type="FunFam" id="1.10.8.1080:FF:000001">
    <property type="entry name" value="N-acetylmuramic acid 6-phosphate etherase"/>
    <property type="match status" value="1"/>
</dbReference>
<dbReference type="FunFam" id="3.40.50.10490:FF:000014">
    <property type="entry name" value="N-acetylmuramic acid 6-phosphate etherase"/>
    <property type="match status" value="1"/>
</dbReference>
<dbReference type="Gene3D" id="1.10.8.1080">
    <property type="match status" value="1"/>
</dbReference>
<dbReference type="Gene3D" id="3.40.50.10490">
    <property type="entry name" value="Glucose-6-phosphate isomerase like protein, domain 1"/>
    <property type="match status" value="1"/>
</dbReference>
<dbReference type="HAMAP" id="MF_00068">
    <property type="entry name" value="MurQ"/>
    <property type="match status" value="1"/>
</dbReference>
<dbReference type="InterPro" id="IPR005488">
    <property type="entry name" value="Etherase_MurQ"/>
</dbReference>
<dbReference type="InterPro" id="IPR005486">
    <property type="entry name" value="Glucokinase_regulatory_CS"/>
</dbReference>
<dbReference type="InterPro" id="IPR040190">
    <property type="entry name" value="MURQ/GCKR"/>
</dbReference>
<dbReference type="InterPro" id="IPR001347">
    <property type="entry name" value="SIS_dom"/>
</dbReference>
<dbReference type="InterPro" id="IPR046348">
    <property type="entry name" value="SIS_dom_sf"/>
</dbReference>
<dbReference type="NCBIfam" id="TIGR00274">
    <property type="entry name" value="N-acetylmuramic acid 6-phosphate etherase"/>
    <property type="match status" value="1"/>
</dbReference>
<dbReference type="NCBIfam" id="NF003915">
    <property type="entry name" value="PRK05441.1"/>
    <property type="match status" value="1"/>
</dbReference>
<dbReference type="NCBIfam" id="NF009222">
    <property type="entry name" value="PRK12570.1"/>
    <property type="match status" value="1"/>
</dbReference>
<dbReference type="PANTHER" id="PTHR10088">
    <property type="entry name" value="GLUCOKINASE REGULATORY PROTEIN"/>
    <property type="match status" value="1"/>
</dbReference>
<dbReference type="PANTHER" id="PTHR10088:SF5">
    <property type="entry name" value="N-ACETYLMURAMIC ACID 6-PHOSPHATE ETHERASE"/>
    <property type="match status" value="1"/>
</dbReference>
<dbReference type="Pfam" id="PF20741">
    <property type="entry name" value="GKRP-like_C"/>
    <property type="match status" value="1"/>
</dbReference>
<dbReference type="Pfam" id="PF22645">
    <property type="entry name" value="GKRP_SIS_N"/>
    <property type="match status" value="1"/>
</dbReference>
<dbReference type="SUPFAM" id="SSF53697">
    <property type="entry name" value="SIS domain"/>
    <property type="match status" value="1"/>
</dbReference>
<dbReference type="PROSITE" id="PS01272">
    <property type="entry name" value="GCKR"/>
    <property type="match status" value="1"/>
</dbReference>
<dbReference type="PROSITE" id="PS51464">
    <property type="entry name" value="SIS"/>
    <property type="match status" value="1"/>
</dbReference>
<accession>A8GI17</accession>
<reference key="1">
    <citation type="submission" date="2007-09" db="EMBL/GenBank/DDBJ databases">
        <title>Complete sequence of chromosome of Serratia proteamaculans 568.</title>
        <authorList>
            <consortium name="US DOE Joint Genome Institute"/>
            <person name="Copeland A."/>
            <person name="Lucas S."/>
            <person name="Lapidus A."/>
            <person name="Barry K."/>
            <person name="Glavina del Rio T."/>
            <person name="Dalin E."/>
            <person name="Tice H."/>
            <person name="Pitluck S."/>
            <person name="Chain P."/>
            <person name="Malfatti S."/>
            <person name="Shin M."/>
            <person name="Vergez L."/>
            <person name="Schmutz J."/>
            <person name="Larimer F."/>
            <person name="Land M."/>
            <person name="Hauser L."/>
            <person name="Kyrpides N."/>
            <person name="Kim E."/>
            <person name="Taghavi S."/>
            <person name="Newman L."/>
            <person name="Vangronsveld J."/>
            <person name="van der Lelie D."/>
            <person name="Richardson P."/>
        </authorList>
    </citation>
    <scope>NUCLEOTIDE SEQUENCE [LARGE SCALE GENOMIC DNA]</scope>
    <source>
        <strain>568</strain>
    </source>
</reference>
<gene>
    <name evidence="1" type="primary">murQ</name>
    <name type="ordered locus">Spro_3661</name>
</gene>
<proteinExistence type="inferred from homology"/>